<evidence type="ECO:0000255" key="1">
    <source>
        <dbReference type="PROSITE-ProRule" id="PRU00794"/>
    </source>
</evidence>
<evidence type="ECO:0000305" key="2"/>
<protein>
    <recommendedName>
        <fullName>Uncharacterized 17.7 kDa protein in e-segB intergenic region</fullName>
    </recommendedName>
</protein>
<organismHost>
    <name type="scientific">Escherichia coli</name>
    <dbReference type="NCBI Taxonomy" id="562"/>
</organismHost>
<name>Y06L_BPT4</name>
<accession>P32271</accession>
<sequence>MQEIKMKTLSAGIIFMTEDKDLFMGRVTGSRKTGMMAHRWDIPKGRVENSDLSALDAARRECLEETGFSNYNPDLLEDLGVFKYSSNKDLQLFYYTIPVEHEMFRNCRCESYFENKDGVMIPEMDAFALIPRTQWQYVMGPSLYRIMNNLF</sequence>
<proteinExistence type="predicted"/>
<reference key="1">
    <citation type="submission" date="1991-01" db="EMBL/GenBank/DDBJ databases">
        <authorList>
            <person name="Efimov V.P."/>
            <person name="Kutter E.M."/>
            <person name="Mesyanhinov V.V."/>
            <person name="Schneider R."/>
        </authorList>
    </citation>
    <scope>NUCLEOTIDE SEQUENCE [GENOMIC DNA]</scope>
</reference>
<reference key="2">
    <citation type="submission" date="1994-08" db="EMBL/GenBank/DDBJ databases">
        <title>Analysis of the region between lysozyme and the tRNA genes of bacteriophage T4.</title>
        <authorList>
            <person name="Anderson B."/>
            <person name="Zurabishvili T."/>
            <person name="Marusich E."/>
            <person name="Schneider M."/>
            <person name="Mullins T."/>
            <person name="Napuli A."/>
            <person name="Mesyanzhinov V.V."/>
            <person name="Neitzel J."/>
            <person name="Kutter E."/>
        </authorList>
    </citation>
    <scope>NUCLEOTIDE SEQUENCE [GENOMIC DNA]</scope>
    <source>
        <strain>D</strain>
    </source>
</reference>
<reference key="3">
    <citation type="journal article" date="2003" name="Microbiol. Mol. Biol. Rev.">
        <title>Bacteriophage T4 genome.</title>
        <authorList>
            <person name="Miller E.S."/>
            <person name="Kutter E."/>
            <person name="Mosig G."/>
            <person name="Arisaka F."/>
            <person name="Kunisawa T."/>
            <person name="Ruger W."/>
        </authorList>
    </citation>
    <scope>NUCLEOTIDE SEQUENCE [LARGE SCALE GENOMIC DNA]</scope>
</reference>
<dbReference type="EMBL" id="X57093">
    <property type="protein sequence ID" value="CAA40376.1"/>
    <property type="status" value="ALT_INIT"/>
    <property type="molecule type" value="Genomic_DNA"/>
</dbReference>
<dbReference type="EMBL" id="L13089">
    <property type="protein sequence ID" value="AAB59293.1"/>
    <property type="status" value="ALT_INIT"/>
    <property type="molecule type" value="Genomic_DNA"/>
</dbReference>
<dbReference type="EMBL" id="AF158101">
    <property type="protein sequence ID" value="AAD42569.1"/>
    <property type="molecule type" value="Genomic_DNA"/>
</dbReference>
<dbReference type="PIR" id="S29534">
    <property type="entry name" value="S29534"/>
</dbReference>
<dbReference type="RefSeq" id="NP_049737.1">
    <property type="nucleotide sequence ID" value="NC_000866.4"/>
</dbReference>
<dbReference type="SMR" id="P32271"/>
<dbReference type="GeneID" id="1258692"/>
<dbReference type="KEGG" id="vg:1258692"/>
<dbReference type="OrthoDB" id="14298at10239"/>
<dbReference type="Proteomes" id="UP000009087">
    <property type="component" value="Segment"/>
</dbReference>
<dbReference type="CDD" id="cd02883">
    <property type="entry name" value="NUDIX_Hydrolase"/>
    <property type="match status" value="1"/>
</dbReference>
<dbReference type="Gene3D" id="3.90.79.10">
    <property type="entry name" value="Nucleoside Triphosphate Pyrophosphohydrolase"/>
    <property type="match status" value="1"/>
</dbReference>
<dbReference type="InterPro" id="IPR015797">
    <property type="entry name" value="NUDIX_hydrolase-like_dom_sf"/>
</dbReference>
<dbReference type="InterPro" id="IPR000086">
    <property type="entry name" value="NUDIX_hydrolase_dom"/>
</dbReference>
<dbReference type="Pfam" id="PF00293">
    <property type="entry name" value="NUDIX"/>
    <property type="match status" value="1"/>
</dbReference>
<dbReference type="SUPFAM" id="SSF55811">
    <property type="entry name" value="Nudix"/>
    <property type="match status" value="1"/>
</dbReference>
<dbReference type="PROSITE" id="PS51462">
    <property type="entry name" value="NUDIX"/>
    <property type="match status" value="1"/>
</dbReference>
<gene>
    <name type="primary">y06L</name>
    <name type="synonym">e.1</name>
    <name type="synonym">msp8</name>
</gene>
<keyword id="KW-1185">Reference proteome</keyword>
<organism>
    <name type="scientific">Enterobacteria phage T4</name>
    <name type="common">Bacteriophage T4</name>
    <dbReference type="NCBI Taxonomy" id="10665"/>
    <lineage>
        <taxon>Viruses</taxon>
        <taxon>Duplodnaviria</taxon>
        <taxon>Heunggongvirae</taxon>
        <taxon>Uroviricota</taxon>
        <taxon>Caudoviricetes</taxon>
        <taxon>Straboviridae</taxon>
        <taxon>Tevenvirinae</taxon>
        <taxon>Tequatrovirus</taxon>
    </lineage>
</organism>
<feature type="chain" id="PRO_0000165143" description="Uncharacterized 17.7 kDa protein in e-segB intergenic region">
    <location>
        <begin position="1"/>
        <end position="151"/>
    </location>
</feature>
<feature type="domain" description="Nudix hydrolase" evidence="1">
    <location>
        <begin position="6"/>
        <end position="143"/>
    </location>
</feature>
<comment type="sequence caution" evidence="2">
    <conflict type="erroneous initiation">
        <sequence resource="EMBL-CDS" id="AAB59293"/>
    </conflict>
</comment>
<comment type="sequence caution" evidence="2">
    <conflict type="erroneous initiation">
        <sequence resource="EMBL-CDS" id="CAA40376"/>
    </conflict>
</comment>